<dbReference type="EC" id="7.1.1.2" evidence="1"/>
<dbReference type="EMBL" id="DQ885666">
    <property type="protein sequence ID" value="ABH12175.1"/>
    <property type="molecule type" value="mRNA"/>
</dbReference>
<dbReference type="RefSeq" id="NP_001073382.1">
    <property type="nucleotide sequence ID" value="NM_001079913.1"/>
</dbReference>
<dbReference type="SMR" id="Q0MQG8"/>
<dbReference type="STRING" id="9598.ENSPTRP00000006209"/>
<dbReference type="PaxDb" id="9598-ENSPTRP00000006209"/>
<dbReference type="GeneID" id="451175"/>
<dbReference type="KEGG" id="ptr:451175"/>
<dbReference type="CTD" id="4722"/>
<dbReference type="eggNOG" id="KOG1713">
    <property type="taxonomic scope" value="Eukaryota"/>
</dbReference>
<dbReference type="InParanoid" id="Q0MQG8"/>
<dbReference type="OrthoDB" id="2450at9604"/>
<dbReference type="Proteomes" id="UP000002277">
    <property type="component" value="Unplaced"/>
</dbReference>
<dbReference type="GO" id="GO:0005743">
    <property type="term" value="C:mitochondrial inner membrane"/>
    <property type="evidence" value="ECO:0000250"/>
    <property type="project" value="UniProtKB"/>
</dbReference>
<dbReference type="GO" id="GO:0031966">
    <property type="term" value="C:mitochondrial membrane"/>
    <property type="evidence" value="ECO:0000250"/>
    <property type="project" value="UniProtKB"/>
</dbReference>
<dbReference type="GO" id="GO:0045271">
    <property type="term" value="C:respiratory chain complex I"/>
    <property type="evidence" value="ECO:0000250"/>
    <property type="project" value="UniProtKB"/>
</dbReference>
<dbReference type="GO" id="GO:0008137">
    <property type="term" value="F:NADH dehydrogenase (ubiquinone) activity"/>
    <property type="evidence" value="ECO:0000250"/>
    <property type="project" value="UniProtKB"/>
</dbReference>
<dbReference type="GO" id="GO:0003954">
    <property type="term" value="F:NADH dehydrogenase activity"/>
    <property type="evidence" value="ECO:0000250"/>
    <property type="project" value="UniProtKB"/>
</dbReference>
<dbReference type="GO" id="GO:0006120">
    <property type="term" value="P:mitochondrial electron transport, NADH to ubiquinone"/>
    <property type="evidence" value="ECO:0000250"/>
    <property type="project" value="UniProtKB"/>
</dbReference>
<dbReference type="GO" id="GO:0032981">
    <property type="term" value="P:mitochondrial respiratory chain complex I assembly"/>
    <property type="evidence" value="ECO:0000250"/>
    <property type="project" value="UniProtKB"/>
</dbReference>
<dbReference type="GO" id="GO:0072593">
    <property type="term" value="P:reactive oxygen species metabolic process"/>
    <property type="evidence" value="ECO:0000250"/>
    <property type="project" value="UniProtKB"/>
</dbReference>
<dbReference type="FunFam" id="3.30.460.80:FF:000002">
    <property type="entry name" value="NADH dehydrogenase iron-sulfur protein 3, mitochondrial"/>
    <property type="match status" value="1"/>
</dbReference>
<dbReference type="Gene3D" id="3.30.460.80">
    <property type="entry name" value="NADH:ubiquinone oxidoreductase, 30kDa subunit"/>
    <property type="match status" value="1"/>
</dbReference>
<dbReference type="HAMAP" id="MF_01357">
    <property type="entry name" value="NDH1_NuoC"/>
    <property type="match status" value="1"/>
</dbReference>
<dbReference type="InterPro" id="IPR010218">
    <property type="entry name" value="NADH_DH_suC"/>
</dbReference>
<dbReference type="InterPro" id="IPR037232">
    <property type="entry name" value="NADH_quin_OxRdtase_su_C/D-like"/>
</dbReference>
<dbReference type="InterPro" id="IPR001268">
    <property type="entry name" value="NADH_UbQ_OxRdtase_30kDa_su"/>
</dbReference>
<dbReference type="InterPro" id="IPR020396">
    <property type="entry name" value="NADH_UbQ_OxRdtase_CS"/>
</dbReference>
<dbReference type="NCBIfam" id="TIGR01961">
    <property type="entry name" value="NuoC_fam"/>
    <property type="match status" value="1"/>
</dbReference>
<dbReference type="NCBIfam" id="NF004733">
    <property type="entry name" value="PRK06074.1-5"/>
    <property type="match status" value="1"/>
</dbReference>
<dbReference type="PANTHER" id="PTHR10884:SF14">
    <property type="entry name" value="NADH DEHYDROGENASE [UBIQUINONE] IRON-SULFUR PROTEIN 3, MITOCHONDRIAL"/>
    <property type="match status" value="1"/>
</dbReference>
<dbReference type="PANTHER" id="PTHR10884">
    <property type="entry name" value="NADH DEHYDROGENASE UBIQUINONE IRON-SULFUR PROTEIN 3"/>
    <property type="match status" value="1"/>
</dbReference>
<dbReference type="Pfam" id="PF00329">
    <property type="entry name" value="Complex1_30kDa"/>
    <property type="match status" value="1"/>
</dbReference>
<dbReference type="SUPFAM" id="SSF143243">
    <property type="entry name" value="Nqo5-like"/>
    <property type="match status" value="1"/>
</dbReference>
<dbReference type="PROSITE" id="PS00542">
    <property type="entry name" value="COMPLEX1_30K"/>
    <property type="match status" value="1"/>
</dbReference>
<gene>
    <name type="primary">NDUFS3</name>
</gene>
<protein>
    <recommendedName>
        <fullName>NADH dehydrogenase [ubiquinone] iron-sulfur protein 3, mitochondrial</fullName>
        <ecNumber evidence="1">7.1.1.2</ecNumber>
    </recommendedName>
    <alternativeName>
        <fullName>Complex I-30kD</fullName>
        <shortName>CI-30kD</shortName>
    </alternativeName>
    <alternativeName>
        <fullName>NADH-ubiquinone oxidoreductase 30 kDa subunit</fullName>
    </alternativeName>
</protein>
<feature type="transit peptide" description="Mitochondrion" evidence="2">
    <location>
        <begin position="1"/>
        <end position="36"/>
    </location>
</feature>
<feature type="chain" id="PRO_0000251860" description="NADH dehydrogenase [ubiquinone] iron-sulfur protein 3, mitochondrial">
    <location>
        <begin position="37"/>
        <end position="264"/>
    </location>
</feature>
<keyword id="KW-0249">Electron transport</keyword>
<keyword id="KW-0472">Membrane</keyword>
<keyword id="KW-0496">Mitochondrion</keyword>
<keyword id="KW-0999">Mitochondrion inner membrane</keyword>
<keyword id="KW-0520">NAD</keyword>
<keyword id="KW-0560">Oxidoreductase</keyword>
<keyword id="KW-1185">Reference proteome</keyword>
<keyword id="KW-0679">Respiratory chain</keyword>
<keyword id="KW-0809">Transit peptide</keyword>
<keyword id="KW-1278">Translocase</keyword>
<keyword id="KW-0813">Transport</keyword>
<keyword id="KW-0830">Ubiquinone</keyword>
<comment type="function">
    <text evidence="1">Core subunit of the mitochondrial membrane respiratory chain NADH dehydrogenase (Complex I) which catalyzes electron transfer from NADH through the respiratory chain, using ubiquinone as an electron acceptor (By similarity). Essential for the catalytic activity and assembly of complex I (By similarity).</text>
</comment>
<comment type="catalytic activity">
    <reaction evidence="1">
        <text>a ubiquinone + NADH + 5 H(+)(in) = a ubiquinol + NAD(+) + 4 H(+)(out)</text>
        <dbReference type="Rhea" id="RHEA:29091"/>
        <dbReference type="Rhea" id="RHEA-COMP:9565"/>
        <dbReference type="Rhea" id="RHEA-COMP:9566"/>
        <dbReference type="ChEBI" id="CHEBI:15378"/>
        <dbReference type="ChEBI" id="CHEBI:16389"/>
        <dbReference type="ChEBI" id="CHEBI:17976"/>
        <dbReference type="ChEBI" id="CHEBI:57540"/>
        <dbReference type="ChEBI" id="CHEBI:57945"/>
        <dbReference type="EC" id="7.1.1.2"/>
    </reaction>
</comment>
<comment type="subunit">
    <text evidence="1">Core subunit of respiratory chain NADH dehydrogenase (Complex I) which is composed of 45 different subunits (By similarity). Interacts with NDUFAF3 (By similarity). Interacts with RAB5IF (By similarity). Found in subcomplexes containing subunits NDUFS2, MT-ND1 and NDUFA13 (By similarity).</text>
</comment>
<comment type="subcellular location">
    <subcellularLocation>
        <location evidence="1">Mitochondrion inner membrane</location>
        <topology evidence="1">Peripheral membrane protein</topology>
        <orientation evidence="1">Matrix side</orientation>
    </subcellularLocation>
</comment>
<comment type="similarity">
    <text evidence="3">Belongs to the complex I 30 kDa subunit family.</text>
</comment>
<sequence>MAAAAVARLWWRGILGASALTRGTGRPSVLLLPVRRESAGADTRPTVRPRNDVAHKQLSAFGEYVAEILPKYVQQVQVSCFNELEVCIHPDGVIPVLTFLRDHTNAQFKSLVDLTAVDVPTRQNRFEIVYNLLSLRFNSRIRVKTYTDELTPIESAVSVFKAANWYEREIWDMFGVFFANHPDLRRILTDYGFEGHPFRKDFPLSGYVELRYDDEVKRVVAEPVELAQEFRKFDLNSPWEAFPVYRQPPESLKLEAGDKNLMPN</sequence>
<evidence type="ECO:0000250" key="1">
    <source>
        <dbReference type="UniProtKB" id="O75489"/>
    </source>
</evidence>
<evidence type="ECO:0000255" key="2"/>
<evidence type="ECO:0000305" key="3"/>
<proteinExistence type="evidence at transcript level"/>
<organism>
    <name type="scientific">Pan troglodytes</name>
    <name type="common">Chimpanzee</name>
    <dbReference type="NCBI Taxonomy" id="9598"/>
    <lineage>
        <taxon>Eukaryota</taxon>
        <taxon>Metazoa</taxon>
        <taxon>Chordata</taxon>
        <taxon>Craniata</taxon>
        <taxon>Vertebrata</taxon>
        <taxon>Euteleostomi</taxon>
        <taxon>Mammalia</taxon>
        <taxon>Eutheria</taxon>
        <taxon>Euarchontoglires</taxon>
        <taxon>Primates</taxon>
        <taxon>Haplorrhini</taxon>
        <taxon>Catarrhini</taxon>
        <taxon>Hominidae</taxon>
        <taxon>Pan</taxon>
    </lineage>
</organism>
<name>NDUS3_PANTR</name>
<accession>Q0MQG8</accession>
<reference key="1">
    <citation type="journal article" date="2006" name="Gene">
        <title>Adaptive selection of mitochondrial complex I subunits during primate radiation.</title>
        <authorList>
            <person name="Mishmar D."/>
            <person name="Ruiz-Pesini E."/>
            <person name="Mondragon-Palomino M."/>
            <person name="Procaccio V."/>
            <person name="Gaut B."/>
            <person name="Wallace D.C."/>
        </authorList>
    </citation>
    <scope>NUCLEOTIDE SEQUENCE [MRNA]</scope>
</reference>